<feature type="signal peptide" evidence="4">
    <location>
        <begin position="1"/>
        <end position="22"/>
    </location>
</feature>
<feature type="chain" id="PRO_0000323396" description="Agouti-signaling protein">
    <location>
        <begin position="23"/>
        <end position="132"/>
    </location>
</feature>
<feature type="domain" description="Agouti" evidence="5">
    <location>
        <begin position="93"/>
        <end position="132"/>
    </location>
</feature>
<feature type="region of interest" description="Disordered" evidence="6">
    <location>
        <begin position="61"/>
        <end position="87"/>
    </location>
</feature>
<feature type="compositionally biased region" description="Basic and acidic residues" evidence="6">
    <location>
        <begin position="63"/>
        <end position="79"/>
    </location>
</feature>
<feature type="glycosylation site" description="N-linked (GlcNAc...) asparagine" evidence="4">
    <location>
        <position position="39"/>
    </location>
</feature>
<feature type="disulfide bond" evidence="5">
    <location>
        <begin position="93"/>
        <end position="108"/>
    </location>
</feature>
<feature type="disulfide bond" evidence="5">
    <location>
        <begin position="100"/>
        <end position="114"/>
    </location>
</feature>
<feature type="disulfide bond" evidence="5">
    <location>
        <begin position="107"/>
        <end position="125"/>
    </location>
</feature>
<feature type="disulfide bond" evidence="5">
    <location>
        <begin position="111"/>
        <end position="132"/>
    </location>
</feature>
<feature type="disulfide bond" evidence="5">
    <location>
        <begin position="116"/>
        <end position="123"/>
    </location>
</feature>
<sequence>MDVTRLLLATLLVFLCFFTACSHPPPGEKLRDDRSLRSNSSVNLLDFPSVSIVALNKNSKQISRKEAEKKRSSKKEASMKKVARPRTPLSAPCVATRDSCKPPAPACCDPCASCQCRFFRSACSCRVLSLNC</sequence>
<gene>
    <name type="primary">ASIP</name>
</gene>
<reference key="1">
    <citation type="submission" date="2007-03" db="EMBL/GenBank/DDBJ databases">
        <title>Association of the agouti signaling protein gene with coat color variation in the macaques.</title>
        <authorList>
            <person name="Nakayama K."/>
            <person name="Shotake T."/>
            <person name="Takenaka O."/>
            <person name="Ishida T."/>
        </authorList>
    </citation>
    <scope>NUCLEOTIDE SEQUENCE [GENOMIC DNA]</scope>
</reference>
<keyword id="KW-1015">Disulfide bond</keyword>
<keyword id="KW-0325">Glycoprotein</keyword>
<keyword id="KW-0960">Knottin</keyword>
<keyword id="KW-0964">Secreted</keyword>
<keyword id="KW-0732">Signal</keyword>
<name>ASIP_MACNR</name>
<comment type="function">
    <text evidence="3">Involved in the regulation of melanogenesis. The binding of ASP to MC1R precludes alpha-MSH initiated signaling and thus blocks production of cAMP, leading to a down-regulation of eumelanogenesis (brown/black pigment) and thus increasing synthesis of pheomelanin (yellow/red pigment) (By similarity).</text>
</comment>
<comment type="subcellular location">
    <subcellularLocation>
        <location evidence="2">Secreted</location>
    </subcellularLocation>
</comment>
<comment type="domain">
    <text evidence="1">The presence of a 'disulfide through disulfide knot' structurally defines this protein as a knottin.</text>
</comment>
<evidence type="ECO:0000250" key="1"/>
<evidence type="ECO:0000250" key="2">
    <source>
        <dbReference type="UniProtKB" id="P42127"/>
    </source>
</evidence>
<evidence type="ECO:0000250" key="3">
    <source>
        <dbReference type="UniProtKB" id="Q03288"/>
    </source>
</evidence>
<evidence type="ECO:0000255" key="4"/>
<evidence type="ECO:0000255" key="5">
    <source>
        <dbReference type="PROSITE-ProRule" id="PRU00494"/>
    </source>
</evidence>
<evidence type="ECO:0000256" key="6">
    <source>
        <dbReference type="SAM" id="MobiDB-lite"/>
    </source>
</evidence>
<proteinExistence type="inferred from homology"/>
<dbReference type="EMBL" id="AB299215">
    <property type="protein sequence ID" value="BAF80799.1"/>
    <property type="molecule type" value="Genomic_DNA"/>
</dbReference>
<dbReference type="GlyCosmos" id="A8CEM7">
    <property type="glycosylation" value="1 site, No reported glycans"/>
</dbReference>
<dbReference type="GO" id="GO:0005615">
    <property type="term" value="C:extracellular space"/>
    <property type="evidence" value="ECO:0000250"/>
    <property type="project" value="UniProtKB"/>
</dbReference>
<dbReference type="GO" id="GO:0031779">
    <property type="term" value="F:melanocortin receptor binding"/>
    <property type="evidence" value="ECO:0007669"/>
    <property type="project" value="TreeGrafter"/>
</dbReference>
<dbReference type="GO" id="GO:0005184">
    <property type="term" value="F:neuropeptide hormone activity"/>
    <property type="evidence" value="ECO:0007669"/>
    <property type="project" value="TreeGrafter"/>
</dbReference>
<dbReference type="GO" id="GO:0009755">
    <property type="term" value="P:hormone-mediated signaling pathway"/>
    <property type="evidence" value="ECO:0007669"/>
    <property type="project" value="InterPro"/>
</dbReference>
<dbReference type="GO" id="GO:0042438">
    <property type="term" value="P:melanin biosynthetic process"/>
    <property type="evidence" value="ECO:0000250"/>
    <property type="project" value="UniProtKB"/>
</dbReference>
<dbReference type="GO" id="GO:0032438">
    <property type="term" value="P:melanosome organization"/>
    <property type="evidence" value="ECO:0007669"/>
    <property type="project" value="TreeGrafter"/>
</dbReference>
<dbReference type="FunFam" id="4.10.760.10:FF:000002">
    <property type="entry name" value="Agouti-signaling protein"/>
    <property type="match status" value="1"/>
</dbReference>
<dbReference type="Gene3D" id="4.10.760.10">
    <property type="entry name" value="Agouti domain"/>
    <property type="match status" value="1"/>
</dbReference>
<dbReference type="InterPro" id="IPR007733">
    <property type="entry name" value="Agouti"/>
</dbReference>
<dbReference type="InterPro" id="IPR027300">
    <property type="entry name" value="Agouti_dom"/>
</dbReference>
<dbReference type="InterPro" id="IPR036836">
    <property type="entry name" value="Agouti_dom_sf"/>
</dbReference>
<dbReference type="PANTHER" id="PTHR16551">
    <property type="entry name" value="AGOUTI RELATED"/>
    <property type="match status" value="1"/>
</dbReference>
<dbReference type="PANTHER" id="PTHR16551:SF1">
    <property type="entry name" value="AGOUTI-SIGNALING PROTEIN"/>
    <property type="match status" value="1"/>
</dbReference>
<dbReference type="Pfam" id="PF05039">
    <property type="entry name" value="Agouti"/>
    <property type="match status" value="1"/>
</dbReference>
<dbReference type="SMART" id="SM00792">
    <property type="entry name" value="Agouti"/>
    <property type="match status" value="1"/>
</dbReference>
<dbReference type="SUPFAM" id="SSF57055">
    <property type="entry name" value="Agouti-related protein"/>
    <property type="match status" value="1"/>
</dbReference>
<dbReference type="PROSITE" id="PS60024">
    <property type="entry name" value="AGOUTI_1"/>
    <property type="match status" value="1"/>
</dbReference>
<dbReference type="PROSITE" id="PS51150">
    <property type="entry name" value="AGOUTI_2"/>
    <property type="match status" value="1"/>
</dbReference>
<protein>
    <recommendedName>
        <fullName>Agouti-signaling protein</fullName>
        <shortName>ASP</shortName>
    </recommendedName>
    <alternativeName>
        <fullName>Agouti switch protein</fullName>
    </alternativeName>
</protein>
<organism>
    <name type="scientific">Macaca nigrescens</name>
    <name type="common">Gorontalo macaque</name>
    <name type="synonym">Macaca nigra nigrescens</name>
    <dbReference type="NCBI Taxonomy" id="90384"/>
    <lineage>
        <taxon>Eukaryota</taxon>
        <taxon>Metazoa</taxon>
        <taxon>Chordata</taxon>
        <taxon>Craniata</taxon>
        <taxon>Vertebrata</taxon>
        <taxon>Euteleostomi</taxon>
        <taxon>Mammalia</taxon>
        <taxon>Eutheria</taxon>
        <taxon>Euarchontoglires</taxon>
        <taxon>Primates</taxon>
        <taxon>Haplorrhini</taxon>
        <taxon>Catarrhini</taxon>
        <taxon>Cercopithecidae</taxon>
        <taxon>Cercopithecinae</taxon>
        <taxon>Macaca</taxon>
    </lineage>
</organism>
<accession>A8CEM7</accession>